<feature type="chain" id="PRO_1000057429" description="Adenosine 5'-phosphosulfate reductase">
    <location>
        <begin position="1"/>
        <end position="233"/>
    </location>
</feature>
<feature type="active site" description="Nucleophile; cysteine thiosulfonate intermediate" evidence="1">
    <location>
        <position position="229"/>
    </location>
</feature>
<feature type="binding site" evidence="1">
    <location>
        <position position="120"/>
    </location>
    <ligand>
        <name>[4Fe-4S] cluster</name>
        <dbReference type="ChEBI" id="CHEBI:49883"/>
    </ligand>
</feature>
<feature type="binding site" evidence="1">
    <location>
        <position position="121"/>
    </location>
    <ligand>
        <name>[4Fe-4S] cluster</name>
        <dbReference type="ChEBI" id="CHEBI:49883"/>
    </ligand>
</feature>
<feature type="binding site" evidence="1">
    <location>
        <position position="203"/>
    </location>
    <ligand>
        <name>[4Fe-4S] cluster</name>
        <dbReference type="ChEBI" id="CHEBI:49883"/>
    </ligand>
</feature>
<feature type="binding site" evidence="1">
    <location>
        <position position="206"/>
    </location>
    <ligand>
        <name>[4Fe-4S] cluster</name>
        <dbReference type="ChEBI" id="CHEBI:49883"/>
    </ligand>
</feature>
<keyword id="KW-0963">Cytoplasm</keyword>
<keyword id="KW-0408">Iron</keyword>
<keyword id="KW-0411">Iron-sulfur</keyword>
<keyword id="KW-0479">Metal-binding</keyword>
<keyword id="KW-0560">Oxidoreductase</keyword>
<accession>A8FD22</accession>
<organism>
    <name type="scientific">Bacillus pumilus (strain SAFR-032)</name>
    <dbReference type="NCBI Taxonomy" id="315750"/>
    <lineage>
        <taxon>Bacteria</taxon>
        <taxon>Bacillati</taxon>
        <taxon>Bacillota</taxon>
        <taxon>Bacilli</taxon>
        <taxon>Bacillales</taxon>
        <taxon>Bacillaceae</taxon>
        <taxon>Bacillus</taxon>
    </lineage>
</organism>
<name>CYSH_BACP2</name>
<gene>
    <name evidence="1" type="primary">cysH</name>
    <name type="ordered locus">BPUM_1456</name>
</gene>
<comment type="function">
    <text evidence="1">Catalyzes the formation of sulfite from adenosine 5'-phosphosulfate (APS) using thioredoxin as an electron donor.</text>
</comment>
<comment type="catalytic activity">
    <reaction evidence="1">
        <text>[thioredoxin]-disulfide + sulfite + AMP + 2 H(+) = adenosine 5'-phosphosulfate + [thioredoxin]-dithiol</text>
        <dbReference type="Rhea" id="RHEA:21976"/>
        <dbReference type="Rhea" id="RHEA-COMP:10698"/>
        <dbReference type="Rhea" id="RHEA-COMP:10700"/>
        <dbReference type="ChEBI" id="CHEBI:15378"/>
        <dbReference type="ChEBI" id="CHEBI:17359"/>
        <dbReference type="ChEBI" id="CHEBI:29950"/>
        <dbReference type="ChEBI" id="CHEBI:50058"/>
        <dbReference type="ChEBI" id="CHEBI:58243"/>
        <dbReference type="ChEBI" id="CHEBI:456215"/>
        <dbReference type="EC" id="1.8.4.10"/>
    </reaction>
</comment>
<comment type="cofactor">
    <cofactor evidence="1">
        <name>[4Fe-4S] cluster</name>
        <dbReference type="ChEBI" id="CHEBI:49883"/>
    </cofactor>
    <text evidence="1">Binds 1 [4Fe-4S] cluster per subunit.</text>
</comment>
<comment type="pathway">
    <text evidence="1">Sulfur metabolism; hydrogen sulfide biosynthesis; sulfite from sulfate.</text>
</comment>
<comment type="subcellular location">
    <subcellularLocation>
        <location evidence="1">Cytoplasm</location>
    </subcellularLocation>
</comment>
<comment type="similarity">
    <text evidence="1">Belongs to the PAPS reductase family. CysH subfamily.</text>
</comment>
<sequence length="233" mass="26719">MLTYENWQEPSITFQEDDLYKGALSVLKWAYGHYGDQLVYACSFGIEGIVLIDLIAKVKKDARIVFLDTGLHFKETYDTIDAVKERYPGLDIVLKTPELTVEEQNDQHGDQLWKTDPQSCCHMRKVIPLQEALSGYPAWLSGLRREQSPKRAGTNFLNKDEKFKSVKVCPLIHWTWKDIWRYASREELTYNPLHDQGYPSIGCAPCTQPAFTAQDLRSGRWSGTAKTECGLHE</sequence>
<proteinExistence type="inferred from homology"/>
<protein>
    <recommendedName>
        <fullName evidence="1">Adenosine 5'-phosphosulfate reductase</fullName>
        <shortName evidence="1">APS reductase</shortName>
        <ecNumber evidence="1">1.8.4.10</ecNumber>
    </recommendedName>
    <alternativeName>
        <fullName evidence="1">5'-adenylylsulfate reductase</fullName>
    </alternativeName>
    <alternativeName>
        <fullName evidence="1">Thioredoxin-dependent 5'-adenylylsulfate reductase</fullName>
    </alternativeName>
</protein>
<evidence type="ECO:0000255" key="1">
    <source>
        <dbReference type="HAMAP-Rule" id="MF_00063"/>
    </source>
</evidence>
<reference key="1">
    <citation type="journal article" date="2007" name="PLoS ONE">
        <title>Paradoxical DNA repair and peroxide resistance gene conservation in Bacillus pumilus SAFR-032.</title>
        <authorList>
            <person name="Gioia J."/>
            <person name="Yerrapragada S."/>
            <person name="Qin X."/>
            <person name="Jiang H."/>
            <person name="Igboeli O.C."/>
            <person name="Muzny D."/>
            <person name="Dugan-Rocha S."/>
            <person name="Ding Y."/>
            <person name="Hawes A."/>
            <person name="Liu W."/>
            <person name="Perez L."/>
            <person name="Kovar C."/>
            <person name="Dinh H."/>
            <person name="Lee S."/>
            <person name="Nazareth L."/>
            <person name="Blyth P."/>
            <person name="Holder M."/>
            <person name="Buhay C."/>
            <person name="Tirumalai M.R."/>
            <person name="Liu Y."/>
            <person name="Dasgupta I."/>
            <person name="Bokhetache L."/>
            <person name="Fujita M."/>
            <person name="Karouia F."/>
            <person name="Eswara Moorthy P."/>
            <person name="Siefert J."/>
            <person name="Uzman A."/>
            <person name="Buzumbo P."/>
            <person name="Verma A."/>
            <person name="Zwiya H."/>
            <person name="McWilliams B.D."/>
            <person name="Olowu A."/>
            <person name="Clinkenbeard K.D."/>
            <person name="Newcombe D."/>
            <person name="Golebiewski L."/>
            <person name="Petrosino J.F."/>
            <person name="Nicholson W.L."/>
            <person name="Fox G.E."/>
            <person name="Venkateswaran K."/>
            <person name="Highlander S.K."/>
            <person name="Weinstock G.M."/>
        </authorList>
    </citation>
    <scope>NUCLEOTIDE SEQUENCE [LARGE SCALE GENOMIC DNA]</scope>
    <source>
        <strain>SAFR-032</strain>
    </source>
</reference>
<dbReference type="EC" id="1.8.4.10" evidence="1"/>
<dbReference type="EMBL" id="CP000813">
    <property type="protein sequence ID" value="ABV62139.1"/>
    <property type="molecule type" value="Genomic_DNA"/>
</dbReference>
<dbReference type="RefSeq" id="WP_012009902.1">
    <property type="nucleotide sequence ID" value="NC_009848.4"/>
</dbReference>
<dbReference type="SMR" id="A8FD22"/>
<dbReference type="STRING" id="315750.BPUM_1456"/>
<dbReference type="GeneID" id="5620719"/>
<dbReference type="KEGG" id="bpu:BPUM_1456"/>
<dbReference type="eggNOG" id="COG0175">
    <property type="taxonomic scope" value="Bacteria"/>
</dbReference>
<dbReference type="HOGENOM" id="CLU_044089_2_1_9"/>
<dbReference type="OrthoDB" id="9772604at2"/>
<dbReference type="Proteomes" id="UP000001355">
    <property type="component" value="Chromosome"/>
</dbReference>
<dbReference type="GO" id="GO:0005737">
    <property type="term" value="C:cytoplasm"/>
    <property type="evidence" value="ECO:0007669"/>
    <property type="project" value="UniProtKB-SubCell"/>
</dbReference>
<dbReference type="GO" id="GO:0051539">
    <property type="term" value="F:4 iron, 4 sulfur cluster binding"/>
    <property type="evidence" value="ECO:0007669"/>
    <property type="project" value="UniProtKB-UniRule"/>
</dbReference>
<dbReference type="GO" id="GO:0043866">
    <property type="term" value="F:adenylyl-sulfate reductase (thioredoxin) activity"/>
    <property type="evidence" value="ECO:0007669"/>
    <property type="project" value="UniProtKB-EC"/>
</dbReference>
<dbReference type="GO" id="GO:0046872">
    <property type="term" value="F:metal ion binding"/>
    <property type="evidence" value="ECO:0007669"/>
    <property type="project" value="UniProtKB-KW"/>
</dbReference>
<dbReference type="GO" id="GO:0004604">
    <property type="term" value="F:phosphoadenylyl-sulfate reductase (thioredoxin) activity"/>
    <property type="evidence" value="ECO:0007669"/>
    <property type="project" value="UniProtKB-UniRule"/>
</dbReference>
<dbReference type="GO" id="GO:0019344">
    <property type="term" value="P:cysteine biosynthetic process"/>
    <property type="evidence" value="ECO:0007669"/>
    <property type="project" value="InterPro"/>
</dbReference>
<dbReference type="GO" id="GO:0070814">
    <property type="term" value="P:hydrogen sulfide biosynthetic process"/>
    <property type="evidence" value="ECO:0007669"/>
    <property type="project" value="UniProtKB-UniRule"/>
</dbReference>
<dbReference type="GO" id="GO:0019379">
    <property type="term" value="P:sulfate assimilation, phosphoadenylyl sulfate reduction by phosphoadenylyl-sulfate reductase (thioredoxin)"/>
    <property type="evidence" value="ECO:0007669"/>
    <property type="project" value="UniProtKB-UniRule"/>
</dbReference>
<dbReference type="CDD" id="cd23945">
    <property type="entry name" value="PAPS_reductase"/>
    <property type="match status" value="1"/>
</dbReference>
<dbReference type="FunFam" id="3.40.50.620:FF:000095">
    <property type="entry name" value="Phosphoadenosine phosphosulfate reductase"/>
    <property type="match status" value="1"/>
</dbReference>
<dbReference type="Gene3D" id="3.40.50.620">
    <property type="entry name" value="HUPs"/>
    <property type="match status" value="1"/>
</dbReference>
<dbReference type="HAMAP" id="MF_00063">
    <property type="entry name" value="CysH"/>
    <property type="match status" value="1"/>
</dbReference>
<dbReference type="InterPro" id="IPR011798">
    <property type="entry name" value="APS_reductase"/>
</dbReference>
<dbReference type="InterPro" id="IPR004511">
    <property type="entry name" value="PAPS/APS_Rdtase"/>
</dbReference>
<dbReference type="InterPro" id="IPR002500">
    <property type="entry name" value="PAPS_reduct_dom"/>
</dbReference>
<dbReference type="InterPro" id="IPR014729">
    <property type="entry name" value="Rossmann-like_a/b/a_fold"/>
</dbReference>
<dbReference type="NCBIfam" id="TIGR02055">
    <property type="entry name" value="APS_reductase"/>
    <property type="match status" value="1"/>
</dbReference>
<dbReference type="NCBIfam" id="TIGR00434">
    <property type="entry name" value="cysH"/>
    <property type="match status" value="1"/>
</dbReference>
<dbReference type="NCBIfam" id="NF002537">
    <property type="entry name" value="PRK02090.1"/>
    <property type="match status" value="1"/>
</dbReference>
<dbReference type="PANTHER" id="PTHR46509">
    <property type="entry name" value="PHOSPHOADENOSINE PHOSPHOSULFATE REDUCTASE"/>
    <property type="match status" value="1"/>
</dbReference>
<dbReference type="PANTHER" id="PTHR46509:SF1">
    <property type="entry name" value="PHOSPHOADENOSINE PHOSPHOSULFATE REDUCTASE"/>
    <property type="match status" value="1"/>
</dbReference>
<dbReference type="Pfam" id="PF01507">
    <property type="entry name" value="PAPS_reduct"/>
    <property type="match status" value="1"/>
</dbReference>
<dbReference type="PIRSF" id="PIRSF000857">
    <property type="entry name" value="PAPS_reductase"/>
    <property type="match status" value="1"/>
</dbReference>
<dbReference type="SUPFAM" id="SSF52402">
    <property type="entry name" value="Adenine nucleotide alpha hydrolases-like"/>
    <property type="match status" value="1"/>
</dbReference>